<comment type="function">
    <text evidence="1">Binds directly to 16S ribosomal RNA.</text>
</comment>
<comment type="similarity">
    <text evidence="1">Belongs to the bacterial ribosomal protein bS20 family.</text>
</comment>
<gene>
    <name evidence="1" type="primary">rpsT</name>
    <name type="ordered locus">BbuZS7_0238</name>
</gene>
<protein>
    <recommendedName>
        <fullName evidence="1">Small ribosomal subunit protein bS20</fullName>
    </recommendedName>
    <alternativeName>
        <fullName evidence="2">30S ribosomal protein S20</fullName>
    </alternativeName>
</protein>
<accession>B7J1G1</accession>
<organism>
    <name type="scientific">Borreliella burgdorferi (strain ZS7)</name>
    <name type="common">Borrelia burgdorferi</name>
    <dbReference type="NCBI Taxonomy" id="445985"/>
    <lineage>
        <taxon>Bacteria</taxon>
        <taxon>Pseudomonadati</taxon>
        <taxon>Spirochaetota</taxon>
        <taxon>Spirochaetia</taxon>
        <taxon>Spirochaetales</taxon>
        <taxon>Borreliaceae</taxon>
        <taxon>Borreliella</taxon>
    </lineage>
</organism>
<dbReference type="EMBL" id="CP001205">
    <property type="protein sequence ID" value="ACK74416.1"/>
    <property type="molecule type" value="Genomic_DNA"/>
</dbReference>
<dbReference type="RefSeq" id="WP_002556832.1">
    <property type="nucleotide sequence ID" value="NC_011728.1"/>
</dbReference>
<dbReference type="SMR" id="B7J1G1"/>
<dbReference type="GeneID" id="77265074"/>
<dbReference type="KEGG" id="bbz:BbuZS7_0238"/>
<dbReference type="HOGENOM" id="CLU_160655_4_0_12"/>
<dbReference type="Proteomes" id="UP000006901">
    <property type="component" value="Chromosome"/>
</dbReference>
<dbReference type="GO" id="GO:0005829">
    <property type="term" value="C:cytosol"/>
    <property type="evidence" value="ECO:0007669"/>
    <property type="project" value="TreeGrafter"/>
</dbReference>
<dbReference type="GO" id="GO:0015935">
    <property type="term" value="C:small ribosomal subunit"/>
    <property type="evidence" value="ECO:0007669"/>
    <property type="project" value="TreeGrafter"/>
</dbReference>
<dbReference type="GO" id="GO:0070181">
    <property type="term" value="F:small ribosomal subunit rRNA binding"/>
    <property type="evidence" value="ECO:0007669"/>
    <property type="project" value="TreeGrafter"/>
</dbReference>
<dbReference type="GO" id="GO:0003735">
    <property type="term" value="F:structural constituent of ribosome"/>
    <property type="evidence" value="ECO:0007669"/>
    <property type="project" value="InterPro"/>
</dbReference>
<dbReference type="GO" id="GO:0006412">
    <property type="term" value="P:translation"/>
    <property type="evidence" value="ECO:0007669"/>
    <property type="project" value="UniProtKB-UniRule"/>
</dbReference>
<dbReference type="Gene3D" id="1.20.58.110">
    <property type="entry name" value="Ribosomal protein S20"/>
    <property type="match status" value="1"/>
</dbReference>
<dbReference type="HAMAP" id="MF_00500">
    <property type="entry name" value="Ribosomal_bS20"/>
    <property type="match status" value="1"/>
</dbReference>
<dbReference type="InterPro" id="IPR002583">
    <property type="entry name" value="Ribosomal_bS20"/>
</dbReference>
<dbReference type="InterPro" id="IPR036510">
    <property type="entry name" value="Ribosomal_bS20_sf"/>
</dbReference>
<dbReference type="NCBIfam" id="TIGR00029">
    <property type="entry name" value="S20"/>
    <property type="match status" value="1"/>
</dbReference>
<dbReference type="PANTHER" id="PTHR33398">
    <property type="entry name" value="30S RIBOSOMAL PROTEIN S20"/>
    <property type="match status" value="1"/>
</dbReference>
<dbReference type="PANTHER" id="PTHR33398:SF1">
    <property type="entry name" value="SMALL RIBOSOMAL SUBUNIT PROTEIN BS20C"/>
    <property type="match status" value="1"/>
</dbReference>
<dbReference type="Pfam" id="PF01649">
    <property type="entry name" value="Ribosomal_S20p"/>
    <property type="match status" value="1"/>
</dbReference>
<dbReference type="SUPFAM" id="SSF46992">
    <property type="entry name" value="Ribosomal protein S20"/>
    <property type="match status" value="1"/>
</dbReference>
<proteinExistence type="inferred from homology"/>
<keyword id="KW-0687">Ribonucleoprotein</keyword>
<keyword id="KW-0689">Ribosomal protein</keyword>
<keyword id="KW-0694">RNA-binding</keyword>
<keyword id="KW-0699">rRNA-binding</keyword>
<reference key="1">
    <citation type="journal article" date="2011" name="J. Bacteriol.">
        <title>Whole-genome sequences of thirteen isolates of Borrelia burgdorferi.</title>
        <authorList>
            <person name="Schutzer S.E."/>
            <person name="Fraser-Liggett C.M."/>
            <person name="Casjens S.R."/>
            <person name="Qiu W.G."/>
            <person name="Dunn J.J."/>
            <person name="Mongodin E.F."/>
            <person name="Luft B.J."/>
        </authorList>
    </citation>
    <scope>NUCLEOTIDE SEQUENCE [LARGE SCALE GENOMIC DNA]</scope>
    <source>
        <strain>ZS7</strain>
    </source>
</reference>
<name>RS20_BORBZ</name>
<feature type="chain" id="PRO_1000126404" description="Small ribosomal subunit protein bS20">
    <location>
        <begin position="1"/>
        <end position="85"/>
    </location>
</feature>
<sequence length="85" mass="9947">MRKNASALKRSRQNLKRKIRNVSVKSELKTIEKRCINMIKAGKKDEAIEFFKFVAKKLDTAARKRIIHKNKAARKKSRLNVLLLK</sequence>
<evidence type="ECO:0000255" key="1">
    <source>
        <dbReference type="HAMAP-Rule" id="MF_00500"/>
    </source>
</evidence>
<evidence type="ECO:0000305" key="2"/>